<organism>
    <name type="scientific">Synechococcus sp. (strain JA-3-3Ab)</name>
    <name type="common">Cyanobacteria bacterium Yellowstone A-Prime</name>
    <dbReference type="NCBI Taxonomy" id="321327"/>
    <lineage>
        <taxon>Bacteria</taxon>
        <taxon>Bacillati</taxon>
        <taxon>Cyanobacteriota</taxon>
        <taxon>Cyanophyceae</taxon>
        <taxon>Synechococcales</taxon>
        <taxon>Synechococcaceae</taxon>
        <taxon>Synechococcus</taxon>
    </lineage>
</organism>
<name>OBG_SYNJA</name>
<proteinExistence type="inferred from homology"/>
<dbReference type="EC" id="3.6.5.-" evidence="1"/>
<dbReference type="EMBL" id="CP000239">
    <property type="protein sequence ID" value="ABD00504.1"/>
    <property type="molecule type" value="Genomic_DNA"/>
</dbReference>
<dbReference type="SMR" id="Q2JS78"/>
<dbReference type="STRING" id="321327.CYA_2378"/>
<dbReference type="KEGG" id="cya:CYA_2378"/>
<dbReference type="eggNOG" id="COG0536">
    <property type="taxonomic scope" value="Bacteria"/>
</dbReference>
<dbReference type="HOGENOM" id="CLU_011747_2_0_3"/>
<dbReference type="OrthoDB" id="9807318at2"/>
<dbReference type="Proteomes" id="UP000008818">
    <property type="component" value="Chromosome"/>
</dbReference>
<dbReference type="GO" id="GO:0005737">
    <property type="term" value="C:cytoplasm"/>
    <property type="evidence" value="ECO:0007669"/>
    <property type="project" value="UniProtKB-SubCell"/>
</dbReference>
<dbReference type="GO" id="GO:0005525">
    <property type="term" value="F:GTP binding"/>
    <property type="evidence" value="ECO:0007669"/>
    <property type="project" value="UniProtKB-UniRule"/>
</dbReference>
<dbReference type="GO" id="GO:0003924">
    <property type="term" value="F:GTPase activity"/>
    <property type="evidence" value="ECO:0007669"/>
    <property type="project" value="UniProtKB-UniRule"/>
</dbReference>
<dbReference type="GO" id="GO:0000287">
    <property type="term" value="F:magnesium ion binding"/>
    <property type="evidence" value="ECO:0007669"/>
    <property type="project" value="InterPro"/>
</dbReference>
<dbReference type="GO" id="GO:0042254">
    <property type="term" value="P:ribosome biogenesis"/>
    <property type="evidence" value="ECO:0007669"/>
    <property type="project" value="UniProtKB-UniRule"/>
</dbReference>
<dbReference type="CDD" id="cd01898">
    <property type="entry name" value="Obg"/>
    <property type="match status" value="1"/>
</dbReference>
<dbReference type="FunFam" id="2.70.210.12:FF:000001">
    <property type="entry name" value="GTPase Obg"/>
    <property type="match status" value="1"/>
</dbReference>
<dbReference type="Gene3D" id="2.70.210.12">
    <property type="entry name" value="GTP1/OBG domain"/>
    <property type="match status" value="1"/>
</dbReference>
<dbReference type="Gene3D" id="3.40.50.300">
    <property type="entry name" value="P-loop containing nucleotide triphosphate hydrolases"/>
    <property type="match status" value="1"/>
</dbReference>
<dbReference type="HAMAP" id="MF_01454">
    <property type="entry name" value="GTPase_Obg"/>
    <property type="match status" value="1"/>
</dbReference>
<dbReference type="InterPro" id="IPR031167">
    <property type="entry name" value="G_OBG"/>
</dbReference>
<dbReference type="InterPro" id="IPR006073">
    <property type="entry name" value="GTP-bd"/>
</dbReference>
<dbReference type="InterPro" id="IPR014100">
    <property type="entry name" value="GTP-bd_Obg/CgtA"/>
</dbReference>
<dbReference type="InterPro" id="IPR006074">
    <property type="entry name" value="GTP1-OBG_CS"/>
</dbReference>
<dbReference type="InterPro" id="IPR006169">
    <property type="entry name" value="GTP1_OBG_dom"/>
</dbReference>
<dbReference type="InterPro" id="IPR036726">
    <property type="entry name" value="GTP1_OBG_dom_sf"/>
</dbReference>
<dbReference type="InterPro" id="IPR045086">
    <property type="entry name" value="OBG_GTPase"/>
</dbReference>
<dbReference type="InterPro" id="IPR027417">
    <property type="entry name" value="P-loop_NTPase"/>
</dbReference>
<dbReference type="NCBIfam" id="TIGR02729">
    <property type="entry name" value="Obg_CgtA"/>
    <property type="match status" value="1"/>
</dbReference>
<dbReference type="NCBIfam" id="NF008954">
    <property type="entry name" value="PRK12296.1"/>
    <property type="match status" value="1"/>
</dbReference>
<dbReference type="NCBIfam" id="NF008955">
    <property type="entry name" value="PRK12297.1"/>
    <property type="match status" value="1"/>
</dbReference>
<dbReference type="NCBIfam" id="NF008956">
    <property type="entry name" value="PRK12299.1"/>
    <property type="match status" value="1"/>
</dbReference>
<dbReference type="PANTHER" id="PTHR11702">
    <property type="entry name" value="DEVELOPMENTALLY REGULATED GTP-BINDING PROTEIN-RELATED"/>
    <property type="match status" value="1"/>
</dbReference>
<dbReference type="PANTHER" id="PTHR11702:SF31">
    <property type="entry name" value="MITOCHONDRIAL RIBOSOME-ASSOCIATED GTPASE 2"/>
    <property type="match status" value="1"/>
</dbReference>
<dbReference type="Pfam" id="PF01018">
    <property type="entry name" value="GTP1_OBG"/>
    <property type="match status" value="1"/>
</dbReference>
<dbReference type="Pfam" id="PF01926">
    <property type="entry name" value="MMR_HSR1"/>
    <property type="match status" value="1"/>
</dbReference>
<dbReference type="PIRSF" id="PIRSF002401">
    <property type="entry name" value="GTP_bd_Obg/CgtA"/>
    <property type="match status" value="1"/>
</dbReference>
<dbReference type="PRINTS" id="PR00326">
    <property type="entry name" value="GTP1OBG"/>
</dbReference>
<dbReference type="SUPFAM" id="SSF82051">
    <property type="entry name" value="Obg GTP-binding protein N-terminal domain"/>
    <property type="match status" value="1"/>
</dbReference>
<dbReference type="SUPFAM" id="SSF52540">
    <property type="entry name" value="P-loop containing nucleoside triphosphate hydrolases"/>
    <property type="match status" value="1"/>
</dbReference>
<dbReference type="PROSITE" id="PS51710">
    <property type="entry name" value="G_OBG"/>
    <property type="match status" value="1"/>
</dbReference>
<dbReference type="PROSITE" id="PS00905">
    <property type="entry name" value="GTP1_OBG"/>
    <property type="match status" value="1"/>
</dbReference>
<dbReference type="PROSITE" id="PS51883">
    <property type="entry name" value="OBG"/>
    <property type="match status" value="1"/>
</dbReference>
<sequence>MHFIDQAEIEVQAGNGGDGIVAFRREKYVPAGGPSGGNGGRGGSVILVADPGLQTLLDFRFQPVIKAEHGAKGGPNHRSGASGADRLVRVPCGTMVFDTETGELLGDLVQPGDRLLVARGGKGGLGNAHFLSNHNRAPRQFTRGQPGERRRLRLELKLIAEVGIVGMPNAGKSTLISVVSSARPKIADYPFTTLQPNLGVVPHPAGDGVVFADIPGLIEGAHRGVGLGHDFLRHVERTRVLIHLVDGTAADPVRDYQIIQQELRAYGHGLSDKPQIVVLNKIDALEPQEVSERTQRLSMAAGAPVSAISAVARQGLEPLLQRVWQCLGRDPDLHRPAAASKIQPVRGQENLRIGVPLPSQNSEMSGYVYLGGGSAPRFAPDQVGH</sequence>
<comment type="function">
    <text evidence="1">An essential GTPase which binds GTP, GDP and possibly (p)ppGpp with moderate affinity, with high nucleotide exchange rates and a fairly low GTP hydrolysis rate. Plays a role in control of the cell cycle, stress response, ribosome biogenesis and in those bacteria that undergo differentiation, in morphogenesis control.</text>
</comment>
<comment type="cofactor">
    <cofactor evidence="1">
        <name>Mg(2+)</name>
        <dbReference type="ChEBI" id="CHEBI:18420"/>
    </cofactor>
</comment>
<comment type="subunit">
    <text evidence="1">Monomer.</text>
</comment>
<comment type="subcellular location">
    <subcellularLocation>
        <location evidence="1">Cytoplasm</location>
    </subcellularLocation>
</comment>
<comment type="similarity">
    <text evidence="1">Belongs to the TRAFAC class OBG-HflX-like GTPase superfamily. OBG GTPase family.</text>
</comment>
<accession>Q2JS78</accession>
<keyword id="KW-0963">Cytoplasm</keyword>
<keyword id="KW-0342">GTP-binding</keyword>
<keyword id="KW-0378">Hydrolase</keyword>
<keyword id="KW-0460">Magnesium</keyword>
<keyword id="KW-0479">Metal-binding</keyword>
<keyword id="KW-0547">Nucleotide-binding</keyword>
<gene>
    <name evidence="1" type="primary">obg</name>
    <name type="ordered locus">CYA_2378</name>
</gene>
<evidence type="ECO:0000255" key="1">
    <source>
        <dbReference type="HAMAP-Rule" id="MF_01454"/>
    </source>
</evidence>
<evidence type="ECO:0000255" key="2">
    <source>
        <dbReference type="PROSITE-ProRule" id="PRU01231"/>
    </source>
</evidence>
<feature type="chain" id="PRO_0000386338" description="GTPase Obg">
    <location>
        <begin position="1"/>
        <end position="385"/>
    </location>
</feature>
<feature type="domain" description="Obg" evidence="2">
    <location>
        <begin position="1"/>
        <end position="159"/>
    </location>
</feature>
<feature type="domain" description="OBG-type G" evidence="1">
    <location>
        <begin position="160"/>
        <end position="328"/>
    </location>
</feature>
<feature type="binding site" evidence="1">
    <location>
        <begin position="166"/>
        <end position="173"/>
    </location>
    <ligand>
        <name>GTP</name>
        <dbReference type="ChEBI" id="CHEBI:37565"/>
    </ligand>
</feature>
<feature type="binding site" evidence="1">
    <location>
        <position position="173"/>
    </location>
    <ligand>
        <name>Mg(2+)</name>
        <dbReference type="ChEBI" id="CHEBI:18420"/>
    </ligand>
</feature>
<feature type="binding site" evidence="1">
    <location>
        <begin position="191"/>
        <end position="195"/>
    </location>
    <ligand>
        <name>GTP</name>
        <dbReference type="ChEBI" id="CHEBI:37565"/>
    </ligand>
</feature>
<feature type="binding site" evidence="1">
    <location>
        <position position="193"/>
    </location>
    <ligand>
        <name>Mg(2+)</name>
        <dbReference type="ChEBI" id="CHEBI:18420"/>
    </ligand>
</feature>
<feature type="binding site" evidence="1">
    <location>
        <begin position="213"/>
        <end position="216"/>
    </location>
    <ligand>
        <name>GTP</name>
        <dbReference type="ChEBI" id="CHEBI:37565"/>
    </ligand>
</feature>
<feature type="binding site" evidence="1">
    <location>
        <begin position="280"/>
        <end position="283"/>
    </location>
    <ligand>
        <name>GTP</name>
        <dbReference type="ChEBI" id="CHEBI:37565"/>
    </ligand>
</feature>
<feature type="binding site" evidence="1">
    <location>
        <begin position="309"/>
        <end position="311"/>
    </location>
    <ligand>
        <name>GTP</name>
        <dbReference type="ChEBI" id="CHEBI:37565"/>
    </ligand>
</feature>
<reference key="1">
    <citation type="journal article" date="2007" name="ISME J.">
        <title>Population level functional diversity in a microbial community revealed by comparative genomic and metagenomic analyses.</title>
        <authorList>
            <person name="Bhaya D."/>
            <person name="Grossman A.R."/>
            <person name="Steunou A.-S."/>
            <person name="Khuri N."/>
            <person name="Cohan F.M."/>
            <person name="Hamamura N."/>
            <person name="Melendrez M.C."/>
            <person name="Bateson M.M."/>
            <person name="Ward D.M."/>
            <person name="Heidelberg J.F."/>
        </authorList>
    </citation>
    <scope>NUCLEOTIDE SEQUENCE [LARGE SCALE GENOMIC DNA]</scope>
    <source>
        <strain>JA-3-3Ab</strain>
    </source>
</reference>
<protein>
    <recommendedName>
        <fullName evidence="1">GTPase Obg</fullName>
        <ecNumber evidence="1">3.6.5.-</ecNumber>
    </recommendedName>
    <alternativeName>
        <fullName evidence="1">GTP-binding protein Obg</fullName>
    </alternativeName>
</protein>